<gene>
    <name evidence="1" type="primary">tal</name>
    <name type="ordered locus">Caul_4909</name>
</gene>
<feature type="chain" id="PRO_1000081407" description="Probable transaldolase">
    <location>
        <begin position="1"/>
        <end position="217"/>
    </location>
</feature>
<feature type="active site" description="Schiff-base intermediate with substrate" evidence="1">
    <location>
        <position position="83"/>
    </location>
</feature>
<dbReference type="EC" id="2.2.1.2" evidence="1"/>
<dbReference type="EMBL" id="CP000927">
    <property type="protein sequence ID" value="ABZ74029.1"/>
    <property type="molecule type" value="Genomic_DNA"/>
</dbReference>
<dbReference type="SMR" id="B0T583"/>
<dbReference type="STRING" id="366602.Caul_4909"/>
<dbReference type="KEGG" id="cak:Caul_4909"/>
<dbReference type="eggNOG" id="COG0176">
    <property type="taxonomic scope" value="Bacteria"/>
</dbReference>
<dbReference type="HOGENOM" id="CLU_079764_0_0_5"/>
<dbReference type="OrthoDB" id="9807051at2"/>
<dbReference type="UniPathway" id="UPA00115">
    <property type="reaction ID" value="UER00414"/>
</dbReference>
<dbReference type="GO" id="GO:0005737">
    <property type="term" value="C:cytoplasm"/>
    <property type="evidence" value="ECO:0007669"/>
    <property type="project" value="UniProtKB-SubCell"/>
</dbReference>
<dbReference type="GO" id="GO:0016832">
    <property type="term" value="F:aldehyde-lyase activity"/>
    <property type="evidence" value="ECO:0007669"/>
    <property type="project" value="InterPro"/>
</dbReference>
<dbReference type="GO" id="GO:0004801">
    <property type="term" value="F:transaldolase activity"/>
    <property type="evidence" value="ECO:0007669"/>
    <property type="project" value="UniProtKB-UniRule"/>
</dbReference>
<dbReference type="GO" id="GO:0005975">
    <property type="term" value="P:carbohydrate metabolic process"/>
    <property type="evidence" value="ECO:0007669"/>
    <property type="project" value="InterPro"/>
</dbReference>
<dbReference type="GO" id="GO:0006098">
    <property type="term" value="P:pentose-phosphate shunt"/>
    <property type="evidence" value="ECO:0007669"/>
    <property type="project" value="UniProtKB-UniRule"/>
</dbReference>
<dbReference type="CDD" id="cd00956">
    <property type="entry name" value="Transaldolase_FSA"/>
    <property type="match status" value="1"/>
</dbReference>
<dbReference type="FunFam" id="3.20.20.70:FF:000018">
    <property type="entry name" value="Probable transaldolase"/>
    <property type="match status" value="1"/>
</dbReference>
<dbReference type="Gene3D" id="3.20.20.70">
    <property type="entry name" value="Aldolase class I"/>
    <property type="match status" value="1"/>
</dbReference>
<dbReference type="HAMAP" id="MF_00494">
    <property type="entry name" value="Transaldolase_3b"/>
    <property type="match status" value="1"/>
</dbReference>
<dbReference type="InterPro" id="IPR013785">
    <property type="entry name" value="Aldolase_TIM"/>
</dbReference>
<dbReference type="InterPro" id="IPR001585">
    <property type="entry name" value="TAL/FSA"/>
</dbReference>
<dbReference type="InterPro" id="IPR022999">
    <property type="entry name" value="Transaldolase_3B"/>
</dbReference>
<dbReference type="InterPro" id="IPR004731">
    <property type="entry name" value="Transaldolase_3B/F6P_aldolase"/>
</dbReference>
<dbReference type="InterPro" id="IPR018225">
    <property type="entry name" value="Transaldolase_AS"/>
</dbReference>
<dbReference type="InterPro" id="IPR033919">
    <property type="entry name" value="TSA/FSA_arc/bac"/>
</dbReference>
<dbReference type="NCBIfam" id="TIGR00875">
    <property type="entry name" value="fsa_talC_mipB"/>
    <property type="match status" value="1"/>
</dbReference>
<dbReference type="PANTHER" id="PTHR10683:SF40">
    <property type="entry name" value="FRUCTOSE-6-PHOSPHATE ALDOLASE 1-RELATED"/>
    <property type="match status" value="1"/>
</dbReference>
<dbReference type="PANTHER" id="PTHR10683">
    <property type="entry name" value="TRANSALDOLASE"/>
    <property type="match status" value="1"/>
</dbReference>
<dbReference type="Pfam" id="PF00923">
    <property type="entry name" value="TAL_FSA"/>
    <property type="match status" value="1"/>
</dbReference>
<dbReference type="SUPFAM" id="SSF51569">
    <property type="entry name" value="Aldolase"/>
    <property type="match status" value="1"/>
</dbReference>
<dbReference type="PROSITE" id="PS01054">
    <property type="entry name" value="TRANSALDOLASE_1"/>
    <property type="match status" value="1"/>
</dbReference>
<accession>B0T583</accession>
<evidence type="ECO:0000255" key="1">
    <source>
        <dbReference type="HAMAP-Rule" id="MF_00494"/>
    </source>
</evidence>
<reference key="1">
    <citation type="submission" date="2008-01" db="EMBL/GenBank/DDBJ databases">
        <title>Complete sequence of chromosome of Caulobacter sp. K31.</title>
        <authorList>
            <consortium name="US DOE Joint Genome Institute"/>
            <person name="Copeland A."/>
            <person name="Lucas S."/>
            <person name="Lapidus A."/>
            <person name="Barry K."/>
            <person name="Glavina del Rio T."/>
            <person name="Dalin E."/>
            <person name="Tice H."/>
            <person name="Pitluck S."/>
            <person name="Bruce D."/>
            <person name="Goodwin L."/>
            <person name="Thompson L.S."/>
            <person name="Brettin T."/>
            <person name="Detter J.C."/>
            <person name="Han C."/>
            <person name="Schmutz J."/>
            <person name="Larimer F."/>
            <person name="Land M."/>
            <person name="Hauser L."/>
            <person name="Kyrpides N."/>
            <person name="Kim E."/>
            <person name="Stephens C."/>
            <person name="Richardson P."/>
        </authorList>
    </citation>
    <scope>NUCLEOTIDE SEQUENCE [LARGE SCALE GENOMIC DNA]</scope>
    <source>
        <strain>K31</strain>
    </source>
</reference>
<sequence length="217" mass="22867">MQIFLDSTDTKVIADLASTGLVDGVTTNPTLIAKSGRPMLEVIAEICDLVPGPISAEVAATTHEAMVAEGRKLAAIAPNVVVKIPLTRDGLIACAAFAGEGISTNVTLCFSPTQALLAAKAGATYVSPFIGRLDDYGFDGMDLIRDIRAIYDNYGYETEILAASVRNVTHVKDAAIVGADVVTIPPATFSDLFKHPLTDKGLEQFLKDWAGTGQSIL</sequence>
<organism>
    <name type="scientific">Caulobacter sp. (strain K31)</name>
    <dbReference type="NCBI Taxonomy" id="366602"/>
    <lineage>
        <taxon>Bacteria</taxon>
        <taxon>Pseudomonadati</taxon>
        <taxon>Pseudomonadota</taxon>
        <taxon>Alphaproteobacteria</taxon>
        <taxon>Caulobacterales</taxon>
        <taxon>Caulobacteraceae</taxon>
        <taxon>Caulobacter</taxon>
    </lineage>
</organism>
<protein>
    <recommendedName>
        <fullName evidence="1">Probable transaldolase</fullName>
        <ecNumber evidence="1">2.2.1.2</ecNumber>
    </recommendedName>
</protein>
<comment type="function">
    <text evidence="1">Transaldolase is important for the balance of metabolites in the pentose-phosphate pathway.</text>
</comment>
<comment type="catalytic activity">
    <reaction evidence="1">
        <text>D-sedoheptulose 7-phosphate + D-glyceraldehyde 3-phosphate = D-erythrose 4-phosphate + beta-D-fructose 6-phosphate</text>
        <dbReference type="Rhea" id="RHEA:17053"/>
        <dbReference type="ChEBI" id="CHEBI:16897"/>
        <dbReference type="ChEBI" id="CHEBI:57483"/>
        <dbReference type="ChEBI" id="CHEBI:57634"/>
        <dbReference type="ChEBI" id="CHEBI:59776"/>
        <dbReference type="EC" id="2.2.1.2"/>
    </reaction>
</comment>
<comment type="pathway">
    <text evidence="1">Carbohydrate degradation; pentose phosphate pathway; D-glyceraldehyde 3-phosphate and beta-D-fructose 6-phosphate from D-ribose 5-phosphate and D-xylulose 5-phosphate (non-oxidative stage): step 2/3.</text>
</comment>
<comment type="subcellular location">
    <subcellularLocation>
        <location evidence="1">Cytoplasm</location>
    </subcellularLocation>
</comment>
<comment type="similarity">
    <text evidence="1">Belongs to the transaldolase family. Type 3B subfamily.</text>
</comment>
<keyword id="KW-0963">Cytoplasm</keyword>
<keyword id="KW-0570">Pentose shunt</keyword>
<keyword id="KW-0704">Schiff base</keyword>
<keyword id="KW-0808">Transferase</keyword>
<name>TAL_CAUSK</name>
<proteinExistence type="inferred from homology"/>